<evidence type="ECO:0000255" key="1">
    <source>
        <dbReference type="HAMAP-Rule" id="MF_00129"/>
    </source>
</evidence>
<keyword id="KW-0963">Cytoplasm</keyword>
<keyword id="KW-0274">FAD</keyword>
<keyword id="KW-0285">Flavoprotein</keyword>
<keyword id="KW-0520">NAD</keyword>
<keyword id="KW-1185">Reference proteome</keyword>
<keyword id="KW-0819">tRNA processing</keyword>
<sequence>MTHMIYPKTYDVIVVGGGHAGTEAALAAARMGAQTLLLTHNIETLGQMSCNPSIGGIGKGHLVRELDALGGAMALATDKSGIQFRRLNASKGAAVRATRAQADRILYKASIREMLENQENLDLFQQAVEDVTLEGERISGVITAMGVEFKARAVVLTAGTFLSGKIHIGLENYEGGRAGDPAAKSLGGRLRELKLPQGRLKTGTPPRIDGRTIDFSQLTEQPGDTPVPVMSVRGNAEMHPRQVSCWITHTNTQTHDIIRSGFDRSPMFTGKIEGVGPRYCPSIEDKINRFADKDSHQIFLEPEGLTTHEYYPNGISTSLPFDIQIALVRSMKGLENAHILRPGYAIEYDYFDPRNLKASLETKTIEGLFFAGQINGTTGYEEAAAQGLLAGANAVQYVRGQDPLLLRREQAYLGVLVDDLITKGLNEPYRMFTSRAEYRLQLREDNADMRLTEDGYKIGLVGEAQWRMFNEKREAVEREIQRLKTTWYTPQKLAEDEQIRVFGQKLSREANLHDLLRRPNLDYAALMTLEGAMPSENLSAEVIEQVEIQVKYQGYIDRQNEEIDSRRDIETLKLPDGIDYGRVKGLSAEVQQKLNQHKPETVGQASRISGVTPAAVALLMVHLKRGFKDAK</sequence>
<reference key="1">
    <citation type="submission" date="2003-03" db="EMBL/GenBank/DDBJ databases">
        <title>The complete genome sequence of Neisseria gonorrhoeae.</title>
        <authorList>
            <person name="Lewis L.A."/>
            <person name="Gillaspy A.F."/>
            <person name="McLaughlin R.E."/>
            <person name="Gipson M."/>
            <person name="Ducey T.F."/>
            <person name="Ownbey T."/>
            <person name="Hartman K."/>
            <person name="Nydick C."/>
            <person name="Carson M.B."/>
            <person name="Vaughn J."/>
            <person name="Thomson C."/>
            <person name="Song L."/>
            <person name="Lin S."/>
            <person name="Yuan X."/>
            <person name="Najar F."/>
            <person name="Zhan M."/>
            <person name="Ren Q."/>
            <person name="Zhu H."/>
            <person name="Qi S."/>
            <person name="Kenton S.M."/>
            <person name="Lai H."/>
            <person name="White J.D."/>
            <person name="Clifton S."/>
            <person name="Roe B.A."/>
            <person name="Dyer D.W."/>
        </authorList>
    </citation>
    <scope>NUCLEOTIDE SEQUENCE [LARGE SCALE GENOMIC DNA]</scope>
    <source>
        <strain>ATCC 700825 / FA 1090</strain>
    </source>
</reference>
<accession>Q5F5Y0</accession>
<comment type="function">
    <text evidence="1">NAD-binding protein involved in the addition of a carboxymethylaminomethyl (cmnm) group at the wobble position (U34) of certain tRNAs, forming tRNA-cmnm(5)s(2)U34.</text>
</comment>
<comment type="cofactor">
    <cofactor evidence="1">
        <name>FAD</name>
        <dbReference type="ChEBI" id="CHEBI:57692"/>
    </cofactor>
</comment>
<comment type="subunit">
    <text evidence="1">Homodimer. Heterotetramer of two MnmE and two MnmG subunits.</text>
</comment>
<comment type="subcellular location">
    <subcellularLocation>
        <location evidence="1">Cytoplasm</location>
    </subcellularLocation>
</comment>
<comment type="similarity">
    <text evidence="1">Belongs to the MnmG family.</text>
</comment>
<name>MNMG_NEIG1</name>
<protein>
    <recommendedName>
        <fullName evidence="1">tRNA uridine 5-carboxymethylaminomethyl modification enzyme MnmG</fullName>
    </recommendedName>
    <alternativeName>
        <fullName evidence="1">Glucose-inhibited division protein A</fullName>
    </alternativeName>
</protein>
<gene>
    <name evidence="1" type="primary">mnmG</name>
    <name evidence="1" type="synonym">gidA</name>
    <name type="ordered locus">NGO_1788</name>
</gene>
<feature type="chain" id="PRO_0000117139" description="tRNA uridine 5-carboxymethylaminomethyl modification enzyme MnmG">
    <location>
        <begin position="1"/>
        <end position="631"/>
    </location>
</feature>
<feature type="binding site" evidence="1">
    <location>
        <begin position="16"/>
        <end position="21"/>
    </location>
    <ligand>
        <name>FAD</name>
        <dbReference type="ChEBI" id="CHEBI:57692"/>
    </ligand>
</feature>
<feature type="binding site" evidence="1">
    <location>
        <begin position="276"/>
        <end position="290"/>
    </location>
    <ligand>
        <name>NAD(+)</name>
        <dbReference type="ChEBI" id="CHEBI:57540"/>
    </ligand>
</feature>
<organism>
    <name type="scientific">Neisseria gonorrhoeae (strain ATCC 700825 / FA 1090)</name>
    <dbReference type="NCBI Taxonomy" id="242231"/>
    <lineage>
        <taxon>Bacteria</taxon>
        <taxon>Pseudomonadati</taxon>
        <taxon>Pseudomonadota</taxon>
        <taxon>Betaproteobacteria</taxon>
        <taxon>Neisseriales</taxon>
        <taxon>Neisseriaceae</taxon>
        <taxon>Neisseria</taxon>
    </lineage>
</organism>
<dbReference type="EMBL" id="AE004969">
    <property type="protein sequence ID" value="AAW90407.2"/>
    <property type="molecule type" value="Genomic_DNA"/>
</dbReference>
<dbReference type="RefSeq" id="WP_003690010.1">
    <property type="nucleotide sequence ID" value="NC_002946.2"/>
</dbReference>
<dbReference type="SMR" id="Q5F5Y0"/>
<dbReference type="STRING" id="242231.NGO_1788"/>
<dbReference type="KEGG" id="ngo:NGO_1788"/>
<dbReference type="PATRIC" id="fig|242231.10.peg.2146"/>
<dbReference type="HOGENOM" id="CLU_007831_2_2_4"/>
<dbReference type="Proteomes" id="UP000000535">
    <property type="component" value="Chromosome"/>
</dbReference>
<dbReference type="GO" id="GO:0005829">
    <property type="term" value="C:cytosol"/>
    <property type="evidence" value="ECO:0007669"/>
    <property type="project" value="TreeGrafter"/>
</dbReference>
<dbReference type="GO" id="GO:0050660">
    <property type="term" value="F:flavin adenine dinucleotide binding"/>
    <property type="evidence" value="ECO:0007669"/>
    <property type="project" value="UniProtKB-UniRule"/>
</dbReference>
<dbReference type="GO" id="GO:0030488">
    <property type="term" value="P:tRNA methylation"/>
    <property type="evidence" value="ECO:0007669"/>
    <property type="project" value="TreeGrafter"/>
</dbReference>
<dbReference type="GO" id="GO:0002098">
    <property type="term" value="P:tRNA wobble uridine modification"/>
    <property type="evidence" value="ECO:0007669"/>
    <property type="project" value="InterPro"/>
</dbReference>
<dbReference type="FunFam" id="1.10.10.1800:FF:000001">
    <property type="entry name" value="tRNA uridine 5-carboxymethylaminomethyl modification enzyme MnmG"/>
    <property type="match status" value="1"/>
</dbReference>
<dbReference type="FunFam" id="1.10.150.570:FF:000001">
    <property type="entry name" value="tRNA uridine 5-carboxymethylaminomethyl modification enzyme MnmG"/>
    <property type="match status" value="1"/>
</dbReference>
<dbReference type="FunFam" id="3.50.50.60:FF:000002">
    <property type="entry name" value="tRNA uridine 5-carboxymethylaminomethyl modification enzyme MnmG"/>
    <property type="match status" value="1"/>
</dbReference>
<dbReference type="FunFam" id="3.50.50.60:FF:000010">
    <property type="entry name" value="tRNA uridine 5-carboxymethylaminomethyl modification enzyme MnmG"/>
    <property type="match status" value="1"/>
</dbReference>
<dbReference type="Gene3D" id="3.50.50.60">
    <property type="entry name" value="FAD/NAD(P)-binding domain"/>
    <property type="match status" value="2"/>
</dbReference>
<dbReference type="Gene3D" id="1.10.150.570">
    <property type="entry name" value="GidA associated domain, C-terminal subdomain"/>
    <property type="match status" value="1"/>
</dbReference>
<dbReference type="Gene3D" id="1.10.10.1800">
    <property type="entry name" value="tRNA uridine 5-carboxymethylaminomethyl modification enzyme MnmG/GidA"/>
    <property type="match status" value="1"/>
</dbReference>
<dbReference type="HAMAP" id="MF_00129">
    <property type="entry name" value="MnmG_GidA"/>
    <property type="match status" value="1"/>
</dbReference>
<dbReference type="InterPro" id="IPR036188">
    <property type="entry name" value="FAD/NAD-bd_sf"/>
</dbReference>
<dbReference type="InterPro" id="IPR049312">
    <property type="entry name" value="GIDA_C_N"/>
</dbReference>
<dbReference type="InterPro" id="IPR004416">
    <property type="entry name" value="MnmG"/>
</dbReference>
<dbReference type="InterPro" id="IPR002218">
    <property type="entry name" value="MnmG-rel"/>
</dbReference>
<dbReference type="InterPro" id="IPR020595">
    <property type="entry name" value="MnmG-rel_CS"/>
</dbReference>
<dbReference type="InterPro" id="IPR026904">
    <property type="entry name" value="MnmG_C"/>
</dbReference>
<dbReference type="InterPro" id="IPR047001">
    <property type="entry name" value="MnmG_C_subdom"/>
</dbReference>
<dbReference type="InterPro" id="IPR044920">
    <property type="entry name" value="MnmG_C_subdom_sf"/>
</dbReference>
<dbReference type="InterPro" id="IPR040131">
    <property type="entry name" value="MnmG_N"/>
</dbReference>
<dbReference type="NCBIfam" id="TIGR00136">
    <property type="entry name" value="mnmG_gidA"/>
    <property type="match status" value="1"/>
</dbReference>
<dbReference type="PANTHER" id="PTHR11806">
    <property type="entry name" value="GLUCOSE INHIBITED DIVISION PROTEIN A"/>
    <property type="match status" value="1"/>
</dbReference>
<dbReference type="PANTHER" id="PTHR11806:SF0">
    <property type="entry name" value="PROTEIN MTO1 HOMOLOG, MITOCHONDRIAL"/>
    <property type="match status" value="1"/>
</dbReference>
<dbReference type="Pfam" id="PF01134">
    <property type="entry name" value="GIDA"/>
    <property type="match status" value="1"/>
</dbReference>
<dbReference type="Pfam" id="PF21680">
    <property type="entry name" value="GIDA_C_1st"/>
    <property type="match status" value="1"/>
</dbReference>
<dbReference type="Pfam" id="PF13932">
    <property type="entry name" value="SAM_GIDA_C"/>
    <property type="match status" value="1"/>
</dbReference>
<dbReference type="SMART" id="SM01228">
    <property type="entry name" value="GIDA_assoc_3"/>
    <property type="match status" value="1"/>
</dbReference>
<dbReference type="SUPFAM" id="SSF51905">
    <property type="entry name" value="FAD/NAD(P)-binding domain"/>
    <property type="match status" value="1"/>
</dbReference>
<dbReference type="PROSITE" id="PS01280">
    <property type="entry name" value="GIDA_1"/>
    <property type="match status" value="1"/>
</dbReference>
<dbReference type="PROSITE" id="PS01281">
    <property type="entry name" value="GIDA_2"/>
    <property type="match status" value="1"/>
</dbReference>
<proteinExistence type="inferred from homology"/>